<accession>Q39DJ6</accession>
<proteinExistence type="inferred from homology"/>
<sequence length="342" mass="36316">MSAPDGPLARLEARLTREWQRRGALAWALTPFACVFGLCAALRRTAYAQGWKKPVDVGVPVVVVGNVTVGGTGKTPTVIALVDALRAAGFTPGIVSRGYGANVKAPTAVTTASRASAGGDEPLLIARRTGAPVWVCPDRVAAAQALRAAHPDVDVIVSDDGLQHYRLARTVELVVFDHRLGGNGFLLPAGPLREPLSRHRDATLVNDPYSGALPPWPDTYSLALTPGAAWHLDQPALRRPLSQFANERVLAAAGIGAPERFFATLRSAGLAPATRALPDHYAFADNPFVDDAVDAILITEKDAVKLGASWRDARLWVVPVEAALDPRLIALVVEKLRGRSPA</sequence>
<name>LPXK_BURL3</name>
<feature type="chain" id="PRO_0000229949" description="Tetraacyldisaccharide 4'-kinase">
    <location>
        <begin position="1"/>
        <end position="342"/>
    </location>
</feature>
<feature type="binding site" evidence="1">
    <location>
        <begin position="68"/>
        <end position="75"/>
    </location>
    <ligand>
        <name>ATP</name>
        <dbReference type="ChEBI" id="CHEBI:30616"/>
    </ligand>
</feature>
<evidence type="ECO:0000255" key="1">
    <source>
        <dbReference type="HAMAP-Rule" id="MF_00409"/>
    </source>
</evidence>
<reference key="1">
    <citation type="submission" date="2005-10" db="EMBL/GenBank/DDBJ databases">
        <title>Complete sequence of chromosome 1 of Burkholderia sp. 383.</title>
        <authorList>
            <consortium name="US DOE Joint Genome Institute"/>
            <person name="Copeland A."/>
            <person name="Lucas S."/>
            <person name="Lapidus A."/>
            <person name="Barry K."/>
            <person name="Detter J.C."/>
            <person name="Glavina T."/>
            <person name="Hammon N."/>
            <person name="Israni S."/>
            <person name="Pitluck S."/>
            <person name="Chain P."/>
            <person name="Malfatti S."/>
            <person name="Shin M."/>
            <person name="Vergez L."/>
            <person name="Schmutz J."/>
            <person name="Larimer F."/>
            <person name="Land M."/>
            <person name="Kyrpides N."/>
            <person name="Lykidis A."/>
            <person name="Richardson P."/>
        </authorList>
    </citation>
    <scope>NUCLEOTIDE SEQUENCE [LARGE SCALE GENOMIC DNA]</scope>
    <source>
        <strain>ATCC 17760 / DSM 23089 / LMG 22485 / NCIMB 9086 / R18194 / 383</strain>
    </source>
</reference>
<dbReference type="EC" id="2.7.1.130" evidence="1"/>
<dbReference type="EMBL" id="CP000151">
    <property type="protein sequence ID" value="ABB09470.1"/>
    <property type="molecule type" value="Genomic_DNA"/>
</dbReference>
<dbReference type="RefSeq" id="WP_011352988.1">
    <property type="nucleotide sequence ID" value="NC_007510.1"/>
</dbReference>
<dbReference type="SMR" id="Q39DJ6"/>
<dbReference type="GeneID" id="45095759"/>
<dbReference type="KEGG" id="bur:Bcep18194_A5876"/>
<dbReference type="PATRIC" id="fig|482957.22.peg.2867"/>
<dbReference type="HOGENOM" id="CLU_038816_2_0_4"/>
<dbReference type="UniPathway" id="UPA00359">
    <property type="reaction ID" value="UER00482"/>
</dbReference>
<dbReference type="Proteomes" id="UP000002705">
    <property type="component" value="Chromosome 1"/>
</dbReference>
<dbReference type="GO" id="GO:0005886">
    <property type="term" value="C:plasma membrane"/>
    <property type="evidence" value="ECO:0007669"/>
    <property type="project" value="TreeGrafter"/>
</dbReference>
<dbReference type="GO" id="GO:0005524">
    <property type="term" value="F:ATP binding"/>
    <property type="evidence" value="ECO:0007669"/>
    <property type="project" value="UniProtKB-UniRule"/>
</dbReference>
<dbReference type="GO" id="GO:0009029">
    <property type="term" value="F:tetraacyldisaccharide 4'-kinase activity"/>
    <property type="evidence" value="ECO:0007669"/>
    <property type="project" value="UniProtKB-UniRule"/>
</dbReference>
<dbReference type="GO" id="GO:0009245">
    <property type="term" value="P:lipid A biosynthetic process"/>
    <property type="evidence" value="ECO:0007669"/>
    <property type="project" value="UniProtKB-UniRule"/>
</dbReference>
<dbReference type="GO" id="GO:0009244">
    <property type="term" value="P:lipopolysaccharide core region biosynthetic process"/>
    <property type="evidence" value="ECO:0007669"/>
    <property type="project" value="TreeGrafter"/>
</dbReference>
<dbReference type="HAMAP" id="MF_00409">
    <property type="entry name" value="LpxK"/>
    <property type="match status" value="1"/>
</dbReference>
<dbReference type="InterPro" id="IPR003758">
    <property type="entry name" value="LpxK"/>
</dbReference>
<dbReference type="InterPro" id="IPR027417">
    <property type="entry name" value="P-loop_NTPase"/>
</dbReference>
<dbReference type="NCBIfam" id="TIGR00682">
    <property type="entry name" value="lpxK"/>
    <property type="match status" value="1"/>
</dbReference>
<dbReference type="PANTHER" id="PTHR42724">
    <property type="entry name" value="TETRAACYLDISACCHARIDE 4'-KINASE"/>
    <property type="match status" value="1"/>
</dbReference>
<dbReference type="PANTHER" id="PTHR42724:SF1">
    <property type="entry name" value="TETRAACYLDISACCHARIDE 4'-KINASE, MITOCHONDRIAL-RELATED"/>
    <property type="match status" value="1"/>
</dbReference>
<dbReference type="Pfam" id="PF02606">
    <property type="entry name" value="LpxK"/>
    <property type="match status" value="1"/>
</dbReference>
<dbReference type="SUPFAM" id="SSF52540">
    <property type="entry name" value="P-loop containing nucleoside triphosphate hydrolases"/>
    <property type="match status" value="1"/>
</dbReference>
<protein>
    <recommendedName>
        <fullName evidence="1">Tetraacyldisaccharide 4'-kinase</fullName>
        <ecNumber evidence="1">2.7.1.130</ecNumber>
    </recommendedName>
    <alternativeName>
        <fullName evidence="1">Lipid A 4'-kinase</fullName>
    </alternativeName>
</protein>
<organism>
    <name type="scientific">Burkholderia lata (strain ATCC 17760 / DSM 23089 / LMG 22485 / NCIMB 9086 / R18194 / 383)</name>
    <dbReference type="NCBI Taxonomy" id="482957"/>
    <lineage>
        <taxon>Bacteria</taxon>
        <taxon>Pseudomonadati</taxon>
        <taxon>Pseudomonadota</taxon>
        <taxon>Betaproteobacteria</taxon>
        <taxon>Burkholderiales</taxon>
        <taxon>Burkholderiaceae</taxon>
        <taxon>Burkholderia</taxon>
        <taxon>Burkholderia cepacia complex</taxon>
    </lineage>
</organism>
<keyword id="KW-0067">ATP-binding</keyword>
<keyword id="KW-0418">Kinase</keyword>
<keyword id="KW-0441">Lipid A biosynthesis</keyword>
<keyword id="KW-0444">Lipid biosynthesis</keyword>
<keyword id="KW-0443">Lipid metabolism</keyword>
<keyword id="KW-0547">Nucleotide-binding</keyword>
<keyword id="KW-0808">Transferase</keyword>
<comment type="function">
    <text evidence="1">Transfers the gamma-phosphate of ATP to the 4'-position of a tetraacyldisaccharide 1-phosphate intermediate (termed DS-1-P) to form tetraacyldisaccharide 1,4'-bis-phosphate (lipid IVA).</text>
</comment>
<comment type="catalytic activity">
    <reaction evidence="1">
        <text>a lipid A disaccharide + ATP = a lipid IVA + ADP + H(+)</text>
        <dbReference type="Rhea" id="RHEA:67840"/>
        <dbReference type="ChEBI" id="CHEBI:15378"/>
        <dbReference type="ChEBI" id="CHEBI:30616"/>
        <dbReference type="ChEBI" id="CHEBI:176343"/>
        <dbReference type="ChEBI" id="CHEBI:176425"/>
        <dbReference type="ChEBI" id="CHEBI:456216"/>
        <dbReference type="EC" id="2.7.1.130"/>
    </reaction>
</comment>
<comment type="pathway">
    <text evidence="1">Glycolipid biosynthesis; lipid IV(A) biosynthesis; lipid IV(A) from (3R)-3-hydroxytetradecanoyl-[acyl-carrier-protein] and UDP-N-acetyl-alpha-D-glucosamine: step 6/6.</text>
</comment>
<comment type="similarity">
    <text evidence="1">Belongs to the LpxK family.</text>
</comment>
<gene>
    <name evidence="1" type="primary">lpxK</name>
    <name type="ordered locus">Bcep18194_A5876</name>
</gene>